<protein>
    <recommendedName>
        <fullName evidence="1">Bis(5'-nucleosyl)-tetraphosphatase, symmetrical</fullName>
        <ecNumber evidence="1">3.6.1.41</ecNumber>
    </recommendedName>
    <alternativeName>
        <fullName evidence="1">Ap4A hydrolase</fullName>
    </alternativeName>
    <alternativeName>
        <fullName evidence="1">Diadenosine 5',5'''-P1,P4-tetraphosphate pyrophosphohydrolase</fullName>
    </alternativeName>
    <alternativeName>
        <fullName evidence="1">Diadenosine tetraphosphatase</fullName>
    </alternativeName>
</protein>
<dbReference type="EC" id="3.6.1.41" evidence="1"/>
<dbReference type="EMBL" id="CP000606">
    <property type="protein sequence ID" value="ABO22749.1"/>
    <property type="molecule type" value="Genomic_DNA"/>
</dbReference>
<dbReference type="RefSeq" id="WP_011864683.1">
    <property type="nucleotide sequence ID" value="NC_009092.1"/>
</dbReference>
<dbReference type="SMR" id="A3QBA1"/>
<dbReference type="STRING" id="323850.Shew_0877"/>
<dbReference type="KEGG" id="slo:Shew_0877"/>
<dbReference type="eggNOG" id="COG0639">
    <property type="taxonomic scope" value="Bacteria"/>
</dbReference>
<dbReference type="HOGENOM" id="CLU_056184_2_0_6"/>
<dbReference type="OrthoDB" id="9807890at2"/>
<dbReference type="Proteomes" id="UP000001558">
    <property type="component" value="Chromosome"/>
</dbReference>
<dbReference type="GO" id="GO:0008803">
    <property type="term" value="F:bis(5'-nucleosyl)-tetraphosphatase (symmetrical) activity"/>
    <property type="evidence" value="ECO:0007669"/>
    <property type="project" value="UniProtKB-UniRule"/>
</dbReference>
<dbReference type="CDD" id="cd07422">
    <property type="entry name" value="MPP_ApaH"/>
    <property type="match status" value="1"/>
</dbReference>
<dbReference type="Gene3D" id="3.60.21.10">
    <property type="match status" value="1"/>
</dbReference>
<dbReference type="HAMAP" id="MF_00199">
    <property type="entry name" value="ApaH"/>
    <property type="match status" value="1"/>
</dbReference>
<dbReference type="InterPro" id="IPR004617">
    <property type="entry name" value="ApaH"/>
</dbReference>
<dbReference type="InterPro" id="IPR004843">
    <property type="entry name" value="Calcineurin-like_PHP_ApaH"/>
</dbReference>
<dbReference type="InterPro" id="IPR029052">
    <property type="entry name" value="Metallo-depent_PP-like"/>
</dbReference>
<dbReference type="NCBIfam" id="TIGR00668">
    <property type="entry name" value="apaH"/>
    <property type="match status" value="1"/>
</dbReference>
<dbReference type="NCBIfam" id="NF001204">
    <property type="entry name" value="PRK00166.1"/>
    <property type="match status" value="1"/>
</dbReference>
<dbReference type="PANTHER" id="PTHR40942">
    <property type="match status" value="1"/>
</dbReference>
<dbReference type="PANTHER" id="PTHR40942:SF4">
    <property type="entry name" value="CYTOCHROME C5"/>
    <property type="match status" value="1"/>
</dbReference>
<dbReference type="Pfam" id="PF00149">
    <property type="entry name" value="Metallophos"/>
    <property type="match status" value="1"/>
</dbReference>
<dbReference type="PIRSF" id="PIRSF000903">
    <property type="entry name" value="B5n-ttraPtase_sm"/>
    <property type="match status" value="1"/>
</dbReference>
<dbReference type="SUPFAM" id="SSF56300">
    <property type="entry name" value="Metallo-dependent phosphatases"/>
    <property type="match status" value="1"/>
</dbReference>
<feature type="chain" id="PRO_1000012091" description="Bis(5'-nucleosyl)-tetraphosphatase, symmetrical">
    <location>
        <begin position="1"/>
        <end position="274"/>
    </location>
</feature>
<evidence type="ECO:0000255" key="1">
    <source>
        <dbReference type="HAMAP-Rule" id="MF_00199"/>
    </source>
</evidence>
<organism>
    <name type="scientific">Shewanella loihica (strain ATCC BAA-1088 / PV-4)</name>
    <dbReference type="NCBI Taxonomy" id="323850"/>
    <lineage>
        <taxon>Bacteria</taxon>
        <taxon>Pseudomonadati</taxon>
        <taxon>Pseudomonadota</taxon>
        <taxon>Gammaproteobacteria</taxon>
        <taxon>Alteromonadales</taxon>
        <taxon>Shewanellaceae</taxon>
        <taxon>Shewanella</taxon>
    </lineage>
</organism>
<proteinExistence type="inferred from homology"/>
<keyword id="KW-0378">Hydrolase</keyword>
<keyword id="KW-1185">Reference proteome</keyword>
<sequence length="274" mass="30930">MATYFVGDIQGCFDELHVLLAKVDFNPSKDELWVVGDMVARGTQSLETLRYLKGLEGSVKPVLGNHDLHLMALHGKVKRVNPKDNLGALLAAPDLNQLIDWLRLQPLAREHKAHSVLMAHAGIPPQWDVKTVLKESRKVQEALARDDYIEHLIAKMYTNSVSEWSPETKGLKRLVYTINALTRMRFLHSDGRLNFDCKLPPAKGEKEGLIPWFKQPGRAMKGHTLVFGHWAALMGEVNQPGLQALDTGCCWGQYLTLWHLESNQKITQNKLKKS</sequence>
<accession>A3QBA1</accession>
<reference key="1">
    <citation type="submission" date="2007-03" db="EMBL/GenBank/DDBJ databases">
        <title>Complete sequence of Shewanella loihica PV-4.</title>
        <authorList>
            <consortium name="US DOE Joint Genome Institute"/>
            <person name="Copeland A."/>
            <person name="Lucas S."/>
            <person name="Lapidus A."/>
            <person name="Barry K."/>
            <person name="Detter J.C."/>
            <person name="Glavina del Rio T."/>
            <person name="Hammon N."/>
            <person name="Israni S."/>
            <person name="Dalin E."/>
            <person name="Tice H."/>
            <person name="Pitluck S."/>
            <person name="Chain P."/>
            <person name="Malfatti S."/>
            <person name="Shin M."/>
            <person name="Vergez L."/>
            <person name="Schmutz J."/>
            <person name="Larimer F."/>
            <person name="Land M."/>
            <person name="Hauser L."/>
            <person name="Kyrpides N."/>
            <person name="Mikhailova N."/>
            <person name="Romine M.F."/>
            <person name="Serres G."/>
            <person name="Fredrickson J."/>
            <person name="Tiedje J."/>
            <person name="Richardson P."/>
        </authorList>
    </citation>
    <scope>NUCLEOTIDE SEQUENCE [LARGE SCALE GENOMIC DNA]</scope>
    <source>
        <strain>ATCC BAA-1088 / PV-4</strain>
    </source>
</reference>
<gene>
    <name evidence="1" type="primary">apaH</name>
    <name type="ordered locus">Shew_0877</name>
</gene>
<name>APAH_SHELP</name>
<comment type="function">
    <text evidence="1">Hydrolyzes diadenosine 5',5'''-P1,P4-tetraphosphate to yield ADP.</text>
</comment>
<comment type="catalytic activity">
    <reaction evidence="1">
        <text>P(1),P(4)-bis(5'-adenosyl) tetraphosphate + H2O = 2 ADP + 2 H(+)</text>
        <dbReference type="Rhea" id="RHEA:24252"/>
        <dbReference type="ChEBI" id="CHEBI:15377"/>
        <dbReference type="ChEBI" id="CHEBI:15378"/>
        <dbReference type="ChEBI" id="CHEBI:58141"/>
        <dbReference type="ChEBI" id="CHEBI:456216"/>
        <dbReference type="EC" id="3.6.1.41"/>
    </reaction>
</comment>
<comment type="similarity">
    <text evidence="1">Belongs to the Ap4A hydrolase family.</text>
</comment>